<name>NAPES_ARATH</name>
<reference key="1">
    <citation type="journal article" date="2000" name="Nature">
        <title>Sequence and analysis of chromosome 1 of the plant Arabidopsis thaliana.</title>
        <authorList>
            <person name="Theologis A."/>
            <person name="Ecker J.R."/>
            <person name="Palm C.J."/>
            <person name="Federspiel N.A."/>
            <person name="Kaul S."/>
            <person name="White O."/>
            <person name="Alonso J."/>
            <person name="Altafi H."/>
            <person name="Araujo R."/>
            <person name="Bowman C.L."/>
            <person name="Brooks S.Y."/>
            <person name="Buehler E."/>
            <person name="Chan A."/>
            <person name="Chao Q."/>
            <person name="Chen H."/>
            <person name="Cheuk R.F."/>
            <person name="Chin C.W."/>
            <person name="Chung M.K."/>
            <person name="Conn L."/>
            <person name="Conway A.B."/>
            <person name="Conway A.R."/>
            <person name="Creasy T.H."/>
            <person name="Dewar K."/>
            <person name="Dunn P."/>
            <person name="Etgu P."/>
            <person name="Feldblyum T.V."/>
            <person name="Feng J.-D."/>
            <person name="Fong B."/>
            <person name="Fujii C.Y."/>
            <person name="Gill J.E."/>
            <person name="Goldsmith A.D."/>
            <person name="Haas B."/>
            <person name="Hansen N.F."/>
            <person name="Hughes B."/>
            <person name="Huizar L."/>
            <person name="Hunter J.L."/>
            <person name="Jenkins J."/>
            <person name="Johnson-Hopson C."/>
            <person name="Khan S."/>
            <person name="Khaykin E."/>
            <person name="Kim C.J."/>
            <person name="Koo H.L."/>
            <person name="Kremenetskaia I."/>
            <person name="Kurtz D.B."/>
            <person name="Kwan A."/>
            <person name="Lam B."/>
            <person name="Langin-Hooper S."/>
            <person name="Lee A."/>
            <person name="Lee J.M."/>
            <person name="Lenz C.A."/>
            <person name="Li J.H."/>
            <person name="Li Y.-P."/>
            <person name="Lin X."/>
            <person name="Liu S.X."/>
            <person name="Liu Z.A."/>
            <person name="Luros J.S."/>
            <person name="Maiti R."/>
            <person name="Marziali A."/>
            <person name="Militscher J."/>
            <person name="Miranda M."/>
            <person name="Nguyen M."/>
            <person name="Nierman W.C."/>
            <person name="Osborne B.I."/>
            <person name="Pai G."/>
            <person name="Peterson J."/>
            <person name="Pham P.K."/>
            <person name="Rizzo M."/>
            <person name="Rooney T."/>
            <person name="Rowley D."/>
            <person name="Sakano H."/>
            <person name="Salzberg S.L."/>
            <person name="Schwartz J.R."/>
            <person name="Shinn P."/>
            <person name="Southwick A.M."/>
            <person name="Sun H."/>
            <person name="Tallon L.J."/>
            <person name="Tambunga G."/>
            <person name="Toriumi M.J."/>
            <person name="Town C.D."/>
            <person name="Utterback T."/>
            <person name="Van Aken S."/>
            <person name="Vaysberg M."/>
            <person name="Vysotskaia V.S."/>
            <person name="Walker M."/>
            <person name="Wu D."/>
            <person name="Yu G."/>
            <person name="Fraser C.M."/>
            <person name="Venter J.C."/>
            <person name="Davis R.W."/>
        </authorList>
    </citation>
    <scope>NUCLEOTIDE SEQUENCE [LARGE SCALE GENOMIC DNA]</scope>
    <source>
        <strain>cv. Columbia</strain>
    </source>
</reference>
<reference key="2">
    <citation type="journal article" date="2017" name="Plant J.">
        <title>Araport11: a complete reannotation of the Arabidopsis thaliana reference genome.</title>
        <authorList>
            <person name="Cheng C.Y."/>
            <person name="Krishnakumar V."/>
            <person name="Chan A.P."/>
            <person name="Thibaud-Nissen F."/>
            <person name="Schobel S."/>
            <person name="Town C.D."/>
        </authorList>
    </citation>
    <scope>GENOME REANNOTATION</scope>
    <source>
        <strain>cv. Columbia</strain>
    </source>
</reference>
<reference key="3">
    <citation type="journal article" date="2003" name="Science">
        <title>Empirical analysis of transcriptional activity in the Arabidopsis genome.</title>
        <authorList>
            <person name="Yamada K."/>
            <person name="Lim J."/>
            <person name="Dale J.M."/>
            <person name="Chen H."/>
            <person name="Shinn P."/>
            <person name="Palm C.J."/>
            <person name="Southwick A.M."/>
            <person name="Wu H.C."/>
            <person name="Kim C.J."/>
            <person name="Nguyen M."/>
            <person name="Pham P.K."/>
            <person name="Cheuk R.F."/>
            <person name="Karlin-Newmann G."/>
            <person name="Liu S.X."/>
            <person name="Lam B."/>
            <person name="Sakano H."/>
            <person name="Wu T."/>
            <person name="Yu G."/>
            <person name="Miranda M."/>
            <person name="Quach H.L."/>
            <person name="Tripp M."/>
            <person name="Chang C.H."/>
            <person name="Lee J.M."/>
            <person name="Toriumi M.J."/>
            <person name="Chan M.M."/>
            <person name="Tang C.C."/>
            <person name="Onodera C.S."/>
            <person name="Deng J.M."/>
            <person name="Akiyama K."/>
            <person name="Ansari Y."/>
            <person name="Arakawa T."/>
            <person name="Banh J."/>
            <person name="Banno F."/>
            <person name="Bowser L."/>
            <person name="Brooks S.Y."/>
            <person name="Carninci P."/>
            <person name="Chao Q."/>
            <person name="Choy N."/>
            <person name="Enju A."/>
            <person name="Goldsmith A.D."/>
            <person name="Gurjal M."/>
            <person name="Hansen N.F."/>
            <person name="Hayashizaki Y."/>
            <person name="Johnson-Hopson C."/>
            <person name="Hsuan V.W."/>
            <person name="Iida K."/>
            <person name="Karnes M."/>
            <person name="Khan S."/>
            <person name="Koesema E."/>
            <person name="Ishida J."/>
            <person name="Jiang P.X."/>
            <person name="Jones T."/>
            <person name="Kawai J."/>
            <person name="Kamiya A."/>
            <person name="Meyers C."/>
            <person name="Nakajima M."/>
            <person name="Narusaka M."/>
            <person name="Seki M."/>
            <person name="Sakurai T."/>
            <person name="Satou M."/>
            <person name="Tamse R."/>
            <person name="Vaysberg M."/>
            <person name="Wallender E.K."/>
            <person name="Wong C."/>
            <person name="Yamamura Y."/>
            <person name="Yuan S."/>
            <person name="Shinozaki K."/>
            <person name="Davis R.W."/>
            <person name="Theologis A."/>
            <person name="Ecker J.R."/>
        </authorList>
    </citation>
    <scope>NUCLEOTIDE SEQUENCE [LARGE SCALE MRNA]</scope>
    <source>
        <strain>cv. Columbia</strain>
    </source>
</reference>
<reference key="4">
    <citation type="journal article" date="2009" name="J. Biol. Chem.">
        <title>Discovery and characterization of an Arabidopsis thaliana N-acylphosphatidylethanolamine synthase.</title>
        <authorList>
            <person name="Faure L."/>
            <person name="Coulon D."/>
            <person name="Laroche-Traineau J."/>
            <person name="Le Guedard M."/>
            <person name="Schmitter J.-M."/>
            <person name="Testet E."/>
            <person name="Lessire R."/>
            <person name="Bessoule J.-J."/>
        </authorList>
    </citation>
    <scope>FUNCTION</scope>
    <scope>TISSUE SPECIFICITY</scope>
    <scope>DEVELOPMENTAL STAGE</scope>
    <scope>SUBCELLULAR LOCATION</scope>
    <source>
        <strain>cv. Columbia</strain>
    </source>
</reference>
<reference key="5">
    <citation type="journal article" date="2011" name="J. Biol. Chem.">
        <title>Putative N-acylphosphatidylethanolamine synthase from Arabidopsis thaliana is a lysoglycerophospholipid acyltransferase.</title>
        <authorList>
            <person name="Bulat E."/>
            <person name="Garrett T.A."/>
        </authorList>
    </citation>
    <scope>FUNCTION</scope>
</reference>
<dbReference type="EC" id="2.3.1.-"/>
<dbReference type="EMBL" id="AC005679">
    <property type="protein sequence ID" value="AAC83040.1"/>
    <property type="molecule type" value="Genomic_DNA"/>
</dbReference>
<dbReference type="EMBL" id="CP002684">
    <property type="protein sequence ID" value="AEE36139.1"/>
    <property type="molecule type" value="Genomic_DNA"/>
</dbReference>
<dbReference type="EMBL" id="CP002684">
    <property type="protein sequence ID" value="ANM60153.1"/>
    <property type="molecule type" value="Genomic_DNA"/>
</dbReference>
<dbReference type="EMBL" id="AY045874">
    <property type="protein sequence ID" value="AAK76548.1"/>
    <property type="status" value="ALT_FRAME"/>
    <property type="molecule type" value="mRNA"/>
</dbReference>
<dbReference type="PIR" id="G96815">
    <property type="entry name" value="G96815"/>
</dbReference>
<dbReference type="RefSeq" id="NP_001322457.1">
    <property type="nucleotide sequence ID" value="NM_001334840.1"/>
</dbReference>
<dbReference type="RefSeq" id="NP_177990.1">
    <property type="nucleotide sequence ID" value="NM_106516.3"/>
</dbReference>
<dbReference type="SMR" id="Q9ZV87"/>
<dbReference type="FunCoup" id="Q9ZV87">
    <property type="interactions" value="1857"/>
</dbReference>
<dbReference type="STRING" id="3702.Q9ZV87"/>
<dbReference type="GlyGen" id="Q9ZV87">
    <property type="glycosylation" value="1 site"/>
</dbReference>
<dbReference type="PaxDb" id="3702-AT1G78690.1"/>
<dbReference type="EnsemblPlants" id="AT1G78690.1">
    <property type="protein sequence ID" value="AT1G78690.1"/>
    <property type="gene ID" value="AT1G78690"/>
</dbReference>
<dbReference type="EnsemblPlants" id="AT1G78690.5">
    <property type="protein sequence ID" value="AT1G78690.5"/>
    <property type="gene ID" value="AT1G78690"/>
</dbReference>
<dbReference type="GeneID" id="844205"/>
<dbReference type="Gramene" id="AT1G78690.1">
    <property type="protein sequence ID" value="AT1G78690.1"/>
    <property type="gene ID" value="AT1G78690"/>
</dbReference>
<dbReference type="Gramene" id="AT1G78690.5">
    <property type="protein sequence ID" value="AT1G78690.5"/>
    <property type="gene ID" value="AT1G78690"/>
</dbReference>
<dbReference type="KEGG" id="ath:AT1G78690"/>
<dbReference type="Araport" id="AT1G78690"/>
<dbReference type="TAIR" id="AT1G78690">
    <property type="gene designation" value="AT1G78690P"/>
</dbReference>
<dbReference type="eggNOG" id="KOG2847">
    <property type="taxonomic scope" value="Eukaryota"/>
</dbReference>
<dbReference type="HOGENOM" id="CLU_046747_2_0_1"/>
<dbReference type="InParanoid" id="Q9ZV87"/>
<dbReference type="OMA" id="TTGWFNT"/>
<dbReference type="OrthoDB" id="193467at2759"/>
<dbReference type="PhylomeDB" id="Q9ZV87"/>
<dbReference type="BRENDA" id="2.3.1.23">
    <property type="organism ID" value="399"/>
</dbReference>
<dbReference type="PRO" id="PR:Q9ZV87"/>
<dbReference type="Proteomes" id="UP000006548">
    <property type="component" value="Chromosome 1"/>
</dbReference>
<dbReference type="ExpressionAtlas" id="Q9ZV87">
    <property type="expression patterns" value="baseline and differential"/>
</dbReference>
<dbReference type="GO" id="GO:0005886">
    <property type="term" value="C:plasma membrane"/>
    <property type="evidence" value="ECO:0000314"/>
    <property type="project" value="UniProtKB"/>
</dbReference>
<dbReference type="GO" id="GO:0016746">
    <property type="term" value="F:acyltransferase activity"/>
    <property type="evidence" value="ECO:0000314"/>
    <property type="project" value="UniProtKB"/>
</dbReference>
<dbReference type="GO" id="GO:0071617">
    <property type="term" value="F:lysophospholipid acyltransferase activity"/>
    <property type="evidence" value="ECO:0000314"/>
    <property type="project" value="TAIR"/>
</dbReference>
<dbReference type="GO" id="GO:0006650">
    <property type="term" value="P:glycerophospholipid metabolic process"/>
    <property type="evidence" value="ECO:0000314"/>
    <property type="project" value="TAIR"/>
</dbReference>
<dbReference type="GO" id="GO:0008654">
    <property type="term" value="P:phospholipid biosynthetic process"/>
    <property type="evidence" value="ECO:0007669"/>
    <property type="project" value="UniProtKB-KW"/>
</dbReference>
<dbReference type="CDD" id="cd07989">
    <property type="entry name" value="LPLAT_AGPAT-like"/>
    <property type="match status" value="1"/>
</dbReference>
<dbReference type="InterPro" id="IPR002123">
    <property type="entry name" value="Plipid/glycerol_acylTrfase"/>
</dbReference>
<dbReference type="InterPro" id="IPR000872">
    <property type="entry name" value="Tafazzin"/>
</dbReference>
<dbReference type="PANTHER" id="PTHR12497:SF5">
    <property type="entry name" value="N-ACYLPHOSPHATIDYLETHANOLAMINE SYNTHASE"/>
    <property type="match status" value="1"/>
</dbReference>
<dbReference type="PANTHER" id="PTHR12497">
    <property type="entry name" value="TAZ PROTEIN TAFAZZIN"/>
    <property type="match status" value="1"/>
</dbReference>
<dbReference type="Pfam" id="PF01553">
    <property type="entry name" value="Acyltransferase"/>
    <property type="match status" value="1"/>
</dbReference>
<dbReference type="PRINTS" id="PR00979">
    <property type="entry name" value="TAFAZZIN"/>
</dbReference>
<dbReference type="SMART" id="SM00563">
    <property type="entry name" value="PlsC"/>
    <property type="match status" value="1"/>
</dbReference>
<dbReference type="SUPFAM" id="SSF69593">
    <property type="entry name" value="Glycerol-3-phosphate (1)-acyltransferase"/>
    <property type="match status" value="1"/>
</dbReference>
<organism>
    <name type="scientific">Arabidopsis thaliana</name>
    <name type="common">Mouse-ear cress</name>
    <dbReference type="NCBI Taxonomy" id="3702"/>
    <lineage>
        <taxon>Eukaryota</taxon>
        <taxon>Viridiplantae</taxon>
        <taxon>Streptophyta</taxon>
        <taxon>Embryophyta</taxon>
        <taxon>Tracheophyta</taxon>
        <taxon>Spermatophyta</taxon>
        <taxon>Magnoliopsida</taxon>
        <taxon>eudicotyledons</taxon>
        <taxon>Gunneridae</taxon>
        <taxon>Pentapetalae</taxon>
        <taxon>rosids</taxon>
        <taxon>malvids</taxon>
        <taxon>Brassicales</taxon>
        <taxon>Brassicaceae</taxon>
        <taxon>Camelineae</taxon>
        <taxon>Arabidopsis</taxon>
    </lineage>
</organism>
<keyword id="KW-0012">Acyltransferase</keyword>
<keyword id="KW-1003">Cell membrane</keyword>
<keyword id="KW-0444">Lipid biosynthesis</keyword>
<keyword id="KW-0443">Lipid metabolism</keyword>
<keyword id="KW-0472">Membrane</keyword>
<keyword id="KW-0594">Phospholipid biosynthesis</keyword>
<keyword id="KW-1208">Phospholipid metabolism</keyword>
<keyword id="KW-1185">Reference proteome</keyword>
<keyword id="KW-0808">Transferase</keyword>
<keyword id="KW-0812">Transmembrane</keyword>
<keyword id="KW-1133">Transmembrane helix</keyword>
<protein>
    <recommendedName>
        <fullName>N-acylphosphatidylethanolamine synthase</fullName>
        <shortName>NAPE synthase</shortName>
        <ecNumber>2.3.1.-</ecNumber>
    </recommendedName>
    <alternativeName>
        <fullName>Lysoglycerophospholipid acyltransferase</fullName>
    </alternativeName>
    <alternativeName>
        <fullName>Monolysocardiolipin acyltransferase</fullName>
    </alternativeName>
</protein>
<accession>Q9ZV87</accession>
<accession>Q94AQ5</accession>
<proteinExistence type="evidence at transcript level"/>
<sequence>MGKIMEWAARSDHLGGIPRNTVIMAVSAFAKAVANLCNKSSVHNADTLMNLVQSRPPGVPLITVSNHMSTLDDPVMWGAFKGLLSLDPELARWVLAAEDICFRNPIFSYIFRTGKCIPITRGGGIYQENMNEALQRLKDGSWLHTFPEGKVFQDDVPIRRLKWGTASLIARSPVTPIVLPIIHRGFEEMMPENYNNGRRPLVPLPNKHLKVVVGEPIEFDVPMMVETAVLDSRHVTPPLQEVKWPVLTSAGQVLDETAQRHLYIALSEKIQSSLETLRLLAKRL</sequence>
<evidence type="ECO:0000250" key="1"/>
<evidence type="ECO:0000255" key="2"/>
<evidence type="ECO:0000269" key="3">
    <source>
    </source>
</evidence>
<evidence type="ECO:0000269" key="4">
    <source>
    </source>
</evidence>
<evidence type="ECO:0000305" key="5"/>
<comment type="function">
    <text evidence="3 4">Acyltransferase that catalyzes the N-acylation of phosphatidylethanolamine to form N-acylphosphatidylethanolamine (N-acyl-PE) (e.g. NAPEs containing C16:0, C16:1, C18:0, and C18:1). Also mediates the formation of acylphosphatidylglycerol (acyl-PG) from lysoglycerophospholipid by O-acylation. Uses acyl-CoA as acyl donors. Acylates 1-acyllysophosphatidylethanolamine (1-acyllyso-PE) and 1-acyllysophosphatidylglycerol (1-acyllyso-PG) at the sn-2-position.</text>
</comment>
<comment type="subcellular location">
    <subcellularLocation>
        <location evidence="3">Cell membrane</location>
        <topology evidence="3">Single-pass membrane protein</topology>
    </subcellularLocation>
</comment>
<comment type="tissue specificity">
    <text evidence="3">Essentially present in young tissues. Expressed in roots, cotyledons, leaves, and shoot and root apical meristems.</text>
</comment>
<comment type="developmental stage">
    <text evidence="3">In imbibed seeds, accumulates in cotyledons and hypocotyls. In flowers, expressed in the filament of stamens, in the style, and in ovary with eggs of pistil.</text>
</comment>
<comment type="domain">
    <text evidence="1">The HXXXXD motif is essential for acyltransferase activity and may constitute the binding site for the phosphate moiety of the glycerol-3-phosphocholine.</text>
</comment>
<comment type="similarity">
    <text evidence="5">Belongs to the taffazin family.</text>
</comment>
<comment type="sequence caution" evidence="5">
    <conflict type="frameshift">
        <sequence resource="EMBL-CDS" id="AAK76548"/>
    </conflict>
</comment>
<feature type="chain" id="PRO_0000420700" description="N-acylphosphatidylethanolamine synthase">
    <location>
        <begin position="1"/>
        <end position="284"/>
    </location>
</feature>
<feature type="transmembrane region" description="Helical" evidence="2">
    <location>
        <begin position="21"/>
        <end position="37"/>
    </location>
</feature>
<feature type="region of interest" description="Hydrophilic" evidence="1">
    <location>
        <begin position="122"/>
        <end position="163"/>
    </location>
</feature>
<feature type="short sequence motif" description="HXXXXD motif">
    <location>
        <begin position="67"/>
        <end position="72"/>
    </location>
</feature>
<gene>
    <name type="ordered locus">At1g78690</name>
    <name type="ORF">F9K20.27</name>
</gene>